<organism>
    <name type="scientific">Luffa aegyptiaca</name>
    <name type="common">Sponge gourd</name>
    <name type="synonym">Luffa cylindrica</name>
    <dbReference type="NCBI Taxonomy" id="3670"/>
    <lineage>
        <taxon>Eukaryota</taxon>
        <taxon>Viridiplantae</taxon>
        <taxon>Streptophyta</taxon>
        <taxon>Embryophyta</taxon>
        <taxon>Tracheophyta</taxon>
        <taxon>Spermatophyta</taxon>
        <taxon>Magnoliopsida</taxon>
        <taxon>eudicotyledons</taxon>
        <taxon>Gunneridae</taxon>
        <taxon>Pentapetalae</taxon>
        <taxon>rosids</taxon>
        <taxon>fabids</taxon>
        <taxon>Cucurbitales</taxon>
        <taxon>Cucurbitaceae</taxon>
        <taxon>Sicyoeae</taxon>
        <taxon>Luffa</taxon>
    </lineage>
</organism>
<accession>Q00465</accession>
<evidence type="ECO:0000250" key="1"/>
<evidence type="ECO:0000305" key="2"/>
<reference key="1">
    <citation type="journal article" date="1992" name="Plant Mol. Biol.">
        <title>Nucleotide sequence of cDNA encoding alpha-luffin, a ribosome-inactivating protein from Luffa cylindrica.</title>
        <authorList>
            <person name="Kataoka J."/>
            <person name="Habuka N."/>
            <person name="Miyano M."/>
            <person name="Masuta C."/>
            <person name="Koiwai A."/>
        </authorList>
    </citation>
    <scope>NUCLEOTIDE SEQUENCE [MRNA]</scope>
    <source>
        <tissue>Seed</tissue>
    </source>
</reference>
<keyword id="KW-0002">3D-structure</keyword>
<keyword id="KW-0051">Antiviral defense</keyword>
<keyword id="KW-0378">Hydrolase</keyword>
<keyword id="KW-0611">Plant defense</keyword>
<keyword id="KW-0652">Protein synthesis inhibitor</keyword>
<keyword id="KW-0732">Signal</keyword>
<keyword id="KW-0800">Toxin</keyword>
<protein>
    <recommendedName>
        <fullName>Ribosome-inactivating protein luffin-alpha</fullName>
        <ecNumber>3.2.2.22</ecNumber>
    </recommendedName>
    <alternativeName>
        <fullName>rRNA N-glycosidase</fullName>
    </alternativeName>
</protein>
<name>RIPA_LUFAE</name>
<proteinExistence type="evidence at protein level"/>
<feature type="signal peptide">
    <location>
        <begin position="1"/>
        <end position="19"/>
    </location>
</feature>
<feature type="chain" id="PRO_0000030785" description="Ribosome-inactivating protein luffin-alpha">
    <location>
        <begin position="20"/>
        <end position="277"/>
    </location>
</feature>
<feature type="active site" evidence="1">
    <location>
        <position position="179"/>
    </location>
</feature>
<comment type="catalytic activity">
    <reaction>
        <text>Endohydrolysis of the N-glycosidic bond at one specific adenosine on the 28S rRNA.</text>
        <dbReference type="EC" id="3.2.2.22"/>
    </reaction>
</comment>
<comment type="similarity">
    <text evidence="2">Belongs to the ribosome-inactivating protein family. Type 1 RIP subfamily.</text>
</comment>
<sequence>MKRFTVLILAIFVAASTVEADVRFSLSGSSSTSYSKFIGDLRKALPSNGTVYNITLLLSSASGASRYTLMTLSNYDGKAITVAVDVTNVYIMGYLVNSTSYFFNESDAKLASQYVFKGSTIVTLPYSGNYEKLQTAAGKIREKIPLGFPALDSAITTLFHYDSTAAAAAFLVIIQTTAEASRFKYIEGQIIERISKNQVPSLATISLENEWSALSKQIQLAQTNNGTFKTPVVITDDKGQRVEITNVTSKVVTKNIQLLLNYKQNVAAFDEDVSAKH</sequence>
<dbReference type="EC" id="3.2.2.22"/>
<dbReference type="EMBL" id="X62371">
    <property type="protein sequence ID" value="CAA44229.1"/>
    <property type="molecule type" value="mRNA"/>
</dbReference>
<dbReference type="PIR" id="S22494">
    <property type="entry name" value="S22494"/>
</dbReference>
<dbReference type="PDB" id="2OQA">
    <property type="method" value="X-ray"/>
    <property type="resolution" value="1.40 A"/>
    <property type="chains" value="A/B=21-261"/>
</dbReference>
<dbReference type="PDBsum" id="2OQA"/>
<dbReference type="SMR" id="Q00465"/>
<dbReference type="GO" id="GO:0030598">
    <property type="term" value="F:rRNA N-glycosylase activity"/>
    <property type="evidence" value="ECO:0007669"/>
    <property type="project" value="UniProtKB-EC"/>
</dbReference>
<dbReference type="GO" id="GO:0090729">
    <property type="term" value="F:toxin activity"/>
    <property type="evidence" value="ECO:0007669"/>
    <property type="project" value="UniProtKB-KW"/>
</dbReference>
<dbReference type="GO" id="GO:0051607">
    <property type="term" value="P:defense response to virus"/>
    <property type="evidence" value="ECO:0007669"/>
    <property type="project" value="UniProtKB-KW"/>
</dbReference>
<dbReference type="GO" id="GO:0017148">
    <property type="term" value="P:negative regulation of translation"/>
    <property type="evidence" value="ECO:0007669"/>
    <property type="project" value="UniProtKB-KW"/>
</dbReference>
<dbReference type="Gene3D" id="3.40.420.10">
    <property type="entry name" value="Ricin (A subunit), domain 1"/>
    <property type="match status" value="1"/>
</dbReference>
<dbReference type="Gene3D" id="4.10.470.10">
    <property type="entry name" value="Ricin (A Subunit), domain 2"/>
    <property type="match status" value="1"/>
</dbReference>
<dbReference type="InterPro" id="IPR036041">
    <property type="entry name" value="Ribosome-inact_prot_sf"/>
</dbReference>
<dbReference type="InterPro" id="IPR017989">
    <property type="entry name" value="Ribosome_inactivat_1/2"/>
</dbReference>
<dbReference type="InterPro" id="IPR001574">
    <property type="entry name" value="Ribosome_inactivat_prot"/>
</dbReference>
<dbReference type="InterPro" id="IPR017988">
    <property type="entry name" value="Ribosome_inactivat_prot_CS"/>
</dbReference>
<dbReference type="InterPro" id="IPR016138">
    <property type="entry name" value="Ribosome_inactivat_prot_sub1"/>
</dbReference>
<dbReference type="InterPro" id="IPR016139">
    <property type="entry name" value="Ribosome_inactivat_prot_sub2"/>
</dbReference>
<dbReference type="PANTHER" id="PTHR33453">
    <property type="match status" value="1"/>
</dbReference>
<dbReference type="PANTHER" id="PTHR33453:SF34">
    <property type="entry name" value="RIBOSOME-INACTIVATING PROTEIN"/>
    <property type="match status" value="1"/>
</dbReference>
<dbReference type="Pfam" id="PF00161">
    <property type="entry name" value="RIP"/>
    <property type="match status" value="1"/>
</dbReference>
<dbReference type="PRINTS" id="PR00396">
    <property type="entry name" value="SHIGARICIN"/>
</dbReference>
<dbReference type="SUPFAM" id="SSF56371">
    <property type="entry name" value="Ribosome inactivating proteins (RIP)"/>
    <property type="match status" value="1"/>
</dbReference>
<dbReference type="PROSITE" id="PS00275">
    <property type="entry name" value="SHIGA_RICIN"/>
    <property type="match status" value="1"/>
</dbReference>